<evidence type="ECO:0000255" key="1">
    <source>
        <dbReference type="HAMAP-Rule" id="MF_01337"/>
    </source>
</evidence>
<evidence type="ECO:0000305" key="2"/>
<organism>
    <name type="scientific">Saccharolobus islandicus (strain M.16.27)</name>
    <name type="common">Sulfolobus islandicus</name>
    <dbReference type="NCBI Taxonomy" id="427318"/>
    <lineage>
        <taxon>Archaea</taxon>
        <taxon>Thermoproteota</taxon>
        <taxon>Thermoprotei</taxon>
        <taxon>Sulfolobales</taxon>
        <taxon>Sulfolobaceae</taxon>
        <taxon>Saccharolobus</taxon>
    </lineage>
</organism>
<dbReference type="EMBL" id="CP001401">
    <property type="protein sequence ID" value="ACP55371.1"/>
    <property type="molecule type" value="Genomic_DNA"/>
</dbReference>
<dbReference type="RefSeq" id="WP_012711437.1">
    <property type="nucleotide sequence ID" value="NC_012632.1"/>
</dbReference>
<dbReference type="SMR" id="C3N5U6"/>
<dbReference type="KEGG" id="sim:M1627_1489"/>
<dbReference type="HOGENOM" id="CLU_056222_2_0_2"/>
<dbReference type="Proteomes" id="UP000002307">
    <property type="component" value="Chromosome"/>
</dbReference>
<dbReference type="GO" id="GO:0022625">
    <property type="term" value="C:cytosolic large ribosomal subunit"/>
    <property type="evidence" value="ECO:0007669"/>
    <property type="project" value="TreeGrafter"/>
</dbReference>
<dbReference type="GO" id="GO:0008097">
    <property type="term" value="F:5S rRNA binding"/>
    <property type="evidence" value="ECO:0007669"/>
    <property type="project" value="InterPro"/>
</dbReference>
<dbReference type="GO" id="GO:0003735">
    <property type="term" value="F:structural constituent of ribosome"/>
    <property type="evidence" value="ECO:0007669"/>
    <property type="project" value="InterPro"/>
</dbReference>
<dbReference type="GO" id="GO:0000027">
    <property type="term" value="P:ribosomal large subunit assembly"/>
    <property type="evidence" value="ECO:0007669"/>
    <property type="project" value="TreeGrafter"/>
</dbReference>
<dbReference type="GO" id="GO:0006412">
    <property type="term" value="P:translation"/>
    <property type="evidence" value="ECO:0007669"/>
    <property type="project" value="UniProtKB-UniRule"/>
</dbReference>
<dbReference type="CDD" id="cd00432">
    <property type="entry name" value="Ribosomal_L18_L5e"/>
    <property type="match status" value="1"/>
</dbReference>
<dbReference type="FunFam" id="3.30.420.100:FF:000008">
    <property type="entry name" value="50S ribosomal protein L18"/>
    <property type="match status" value="1"/>
</dbReference>
<dbReference type="Gene3D" id="3.30.420.100">
    <property type="match status" value="1"/>
</dbReference>
<dbReference type="HAMAP" id="MF_01337_A">
    <property type="entry name" value="Ribosomal_uL18_A"/>
    <property type="match status" value="1"/>
</dbReference>
<dbReference type="InterPro" id="IPR005485">
    <property type="entry name" value="Rbsml_uL18_euk"/>
</dbReference>
<dbReference type="NCBIfam" id="NF006342">
    <property type="entry name" value="PRK08569.1"/>
    <property type="match status" value="1"/>
</dbReference>
<dbReference type="PANTHER" id="PTHR23410:SF12">
    <property type="entry name" value="LARGE RIBOSOMAL SUBUNIT PROTEIN UL18"/>
    <property type="match status" value="1"/>
</dbReference>
<dbReference type="PANTHER" id="PTHR23410">
    <property type="entry name" value="RIBOSOMAL PROTEIN L5-RELATED"/>
    <property type="match status" value="1"/>
</dbReference>
<dbReference type="Pfam" id="PF17144">
    <property type="entry name" value="Ribosomal_L5e"/>
    <property type="match status" value="2"/>
</dbReference>
<dbReference type="SUPFAM" id="SSF53137">
    <property type="entry name" value="Translational machinery components"/>
    <property type="match status" value="1"/>
</dbReference>
<feature type="chain" id="PRO_1000214684" description="Large ribosomal subunit protein uL18">
    <location>
        <begin position="1"/>
        <end position="196"/>
    </location>
</feature>
<reference key="1">
    <citation type="journal article" date="2009" name="Proc. Natl. Acad. Sci. U.S.A.">
        <title>Biogeography of the Sulfolobus islandicus pan-genome.</title>
        <authorList>
            <person name="Reno M.L."/>
            <person name="Held N.L."/>
            <person name="Fields C.J."/>
            <person name="Burke P.V."/>
            <person name="Whitaker R.J."/>
        </authorList>
    </citation>
    <scope>NUCLEOTIDE SEQUENCE [LARGE SCALE GENOMIC DNA]</scope>
    <source>
        <strain>M.16.27</strain>
    </source>
</reference>
<keyword id="KW-0687">Ribonucleoprotein</keyword>
<keyword id="KW-0689">Ribosomal protein</keyword>
<keyword id="KW-0694">RNA-binding</keyword>
<keyword id="KW-0699">rRNA-binding</keyword>
<sequence>MANGPNYKIKPRRRREGKTNYYKRYVYVISKQIRFIVRITNKYVIVQIAKIDPKGDIMVASAHSSELTKKFEWKGDENNTPSAYLTGYLAALRAVKKGVTECVADIGLHVPSKGNKVFYAIKGAIDAGLKIPIGDISIENDRIKGEHIAKYAEKLKSENLDLYNKLFSRYLGRGLNPENLPSHFEEILNKIKSSGG</sequence>
<proteinExistence type="inferred from homology"/>
<comment type="function">
    <text evidence="1">This is one of the proteins that bind and probably mediate the attachment of the 5S RNA into the large ribosomal subunit, where it forms part of the central protuberance.</text>
</comment>
<comment type="subunit">
    <text evidence="1">Part of the 50S ribosomal subunit. Contacts the 5S and 23S rRNAs.</text>
</comment>
<comment type="similarity">
    <text evidence="1">Belongs to the universal ribosomal protein uL18 family.</text>
</comment>
<gene>
    <name evidence="1" type="primary">rpl18</name>
    <name type="ordered locus">M1627_1489</name>
</gene>
<accession>C3N5U6</accession>
<protein>
    <recommendedName>
        <fullName evidence="1">Large ribosomal subunit protein uL18</fullName>
    </recommendedName>
    <alternativeName>
        <fullName evidence="2">50S ribosomal protein L18</fullName>
    </alternativeName>
</protein>
<name>RL18_SACI3</name>